<keyword id="KW-0150">Chloroplast</keyword>
<keyword id="KW-0472">Membrane</keyword>
<keyword id="KW-0520">NAD</keyword>
<keyword id="KW-0521">NADP</keyword>
<keyword id="KW-0934">Plastid</keyword>
<keyword id="KW-0618">Plastoquinone</keyword>
<keyword id="KW-0874">Quinone</keyword>
<keyword id="KW-0793">Thylakoid</keyword>
<keyword id="KW-1278">Translocase</keyword>
<keyword id="KW-0812">Transmembrane</keyword>
<keyword id="KW-1133">Transmembrane helix</keyword>
<keyword id="KW-0813">Transport</keyword>
<evidence type="ECO:0000255" key="1">
    <source>
        <dbReference type="HAMAP-Rule" id="MF_00445"/>
    </source>
</evidence>
<feature type="chain" id="PRO_0000391291" description="NAD(P)H-quinone oxidoreductase subunit 2 B, chloroplastic">
    <location>
        <begin position="1"/>
        <end position="510"/>
    </location>
</feature>
<feature type="transmembrane region" description="Helical" evidence="1">
    <location>
        <begin position="26"/>
        <end position="46"/>
    </location>
</feature>
<feature type="transmembrane region" description="Helical" evidence="1">
    <location>
        <begin position="57"/>
        <end position="77"/>
    </location>
</feature>
<feature type="transmembrane region" description="Helical" evidence="1">
    <location>
        <begin position="99"/>
        <end position="119"/>
    </location>
</feature>
<feature type="transmembrane region" description="Helical" evidence="1">
    <location>
        <begin position="124"/>
        <end position="144"/>
    </location>
</feature>
<feature type="transmembrane region" description="Helical" evidence="1">
    <location>
        <begin position="149"/>
        <end position="169"/>
    </location>
</feature>
<feature type="transmembrane region" description="Helical" evidence="1">
    <location>
        <begin position="183"/>
        <end position="203"/>
    </location>
</feature>
<feature type="transmembrane region" description="Helical" evidence="1">
    <location>
        <begin position="227"/>
        <end position="247"/>
    </location>
</feature>
<feature type="transmembrane region" description="Helical" evidence="1">
    <location>
        <begin position="295"/>
        <end position="315"/>
    </location>
</feature>
<feature type="transmembrane region" description="Helical" evidence="1">
    <location>
        <begin position="323"/>
        <end position="342"/>
    </location>
</feature>
<feature type="transmembrane region" description="Helical" evidence="1">
    <location>
        <begin position="354"/>
        <end position="374"/>
    </location>
</feature>
<feature type="transmembrane region" description="Helical" evidence="1">
    <location>
        <begin position="395"/>
        <end position="415"/>
    </location>
</feature>
<feature type="transmembrane region" description="Helical" evidence="1">
    <location>
        <begin position="418"/>
        <end position="438"/>
    </location>
</feature>
<feature type="transmembrane region" description="Helical" evidence="1">
    <location>
        <begin position="484"/>
        <end position="504"/>
    </location>
</feature>
<organism>
    <name type="scientific">Oenothera argillicola</name>
    <name type="common">Appalachian evening primrose</name>
    <dbReference type="NCBI Taxonomy" id="3940"/>
    <lineage>
        <taxon>Eukaryota</taxon>
        <taxon>Viridiplantae</taxon>
        <taxon>Streptophyta</taxon>
        <taxon>Embryophyta</taxon>
        <taxon>Tracheophyta</taxon>
        <taxon>Spermatophyta</taxon>
        <taxon>Magnoliopsida</taxon>
        <taxon>eudicotyledons</taxon>
        <taxon>Gunneridae</taxon>
        <taxon>Pentapetalae</taxon>
        <taxon>rosids</taxon>
        <taxon>malvids</taxon>
        <taxon>Myrtales</taxon>
        <taxon>Onagraceae</taxon>
        <taxon>Onagroideae</taxon>
        <taxon>Onagreae</taxon>
        <taxon>Oenothera</taxon>
    </lineage>
</organism>
<gene>
    <name evidence="1" type="primary">ndhB2</name>
</gene>
<geneLocation type="chloroplast"/>
<proteinExistence type="inferred from homology"/>
<comment type="function">
    <text evidence="1">NDH shuttles electrons from NAD(P)H:plastoquinone, via FMN and iron-sulfur (Fe-S) centers, to quinones in the photosynthetic chain and possibly in a chloroplast respiratory chain. The immediate electron acceptor for the enzyme in this species is believed to be plastoquinone. Couples the redox reaction to proton translocation, and thus conserves the redox energy in a proton gradient.</text>
</comment>
<comment type="catalytic activity">
    <reaction evidence="1">
        <text>a plastoquinone + NADH + (n+1) H(+)(in) = a plastoquinol + NAD(+) + n H(+)(out)</text>
        <dbReference type="Rhea" id="RHEA:42608"/>
        <dbReference type="Rhea" id="RHEA-COMP:9561"/>
        <dbReference type="Rhea" id="RHEA-COMP:9562"/>
        <dbReference type="ChEBI" id="CHEBI:15378"/>
        <dbReference type="ChEBI" id="CHEBI:17757"/>
        <dbReference type="ChEBI" id="CHEBI:57540"/>
        <dbReference type="ChEBI" id="CHEBI:57945"/>
        <dbReference type="ChEBI" id="CHEBI:62192"/>
    </reaction>
</comment>
<comment type="catalytic activity">
    <reaction evidence="1">
        <text>a plastoquinone + NADPH + (n+1) H(+)(in) = a plastoquinol + NADP(+) + n H(+)(out)</text>
        <dbReference type="Rhea" id="RHEA:42612"/>
        <dbReference type="Rhea" id="RHEA-COMP:9561"/>
        <dbReference type="Rhea" id="RHEA-COMP:9562"/>
        <dbReference type="ChEBI" id="CHEBI:15378"/>
        <dbReference type="ChEBI" id="CHEBI:17757"/>
        <dbReference type="ChEBI" id="CHEBI:57783"/>
        <dbReference type="ChEBI" id="CHEBI:58349"/>
        <dbReference type="ChEBI" id="CHEBI:62192"/>
    </reaction>
</comment>
<comment type="subunit">
    <text evidence="1">NDH is composed of at least 16 different subunits, 5 of which are encoded in the nucleus.</text>
</comment>
<comment type="subcellular location">
    <subcellularLocation>
        <location evidence="1">Plastid</location>
        <location evidence="1">Chloroplast thylakoid membrane</location>
        <topology evidence="1">Multi-pass membrane protein</topology>
    </subcellularLocation>
</comment>
<comment type="similarity">
    <text evidence="1">Belongs to the complex I subunit 2 family.</text>
</comment>
<sequence length="510" mass="56530">MIWHVQNENLILDSTIIFMKAFHLPLFDGSFIFPEGILIFGLILLLMIDSTSDQTDIPWFYFISSISLVMSITALLFRWREEPRILFSGNFQTNNFNEIFQFLILLCSTLCIPLSVEYIECTEMAITEFLLFVLTATLGGMFLCGANDLITIFVAPECFSLCSYLLSGYTKKDVRSNEATMKYLLMGGASSSILVHGFSWLYGSSGGEIELQEIVNGLINTQMYNSPGISIALIFITVGIGFKLSPAPSHQWTPDVYEGSPTPVVAFLSVTSKVAASASATRIFDIPFYFSSNEWHPLLEILAILSMILGNLIAITQTSMKRMLAYSSIGQIGYVIIGIIVGDANGGYASMITYMLFYISMNLGTFACIVLFGLRTGTDNIRDYAGLYTKDPFLALSLALCLLSLGGLPPLAGFFGKLHLFWCGWQAGLYFLVSIGLFTSVVSIYYYLKIIKLLMTGRKQEITPHVRNYRRSPLRSNNSIELSMIVCVIASTIPGISMNPIIAIAQDTLF</sequence>
<reference key="1">
    <citation type="journal article" date="2008" name="Nucleic Acids Res.">
        <title>The complete nucleotide sequences of the five genetically distinct plastid genomes of Oenothera, subsection Oenothera: I. Sequence evaluation and plastome evolution.</title>
        <authorList>
            <person name="Greiner S."/>
            <person name="Wang X."/>
            <person name="Rauwolf U."/>
            <person name="Silber M.V."/>
            <person name="Mayer K."/>
            <person name="Meurer J."/>
            <person name="Haberer G."/>
            <person name="Herrmann R.G."/>
        </authorList>
    </citation>
    <scope>NUCLEOTIDE SEQUENCE [LARGE SCALE GENOMIC DNA]</scope>
    <source>
        <strain>cv. Douthat 1</strain>
    </source>
</reference>
<accession>P0CD07</accession>
<accession>B0Z4S0</accession>
<protein>
    <recommendedName>
        <fullName evidence="1">NAD(P)H-quinone oxidoreductase subunit 2 B, chloroplastic</fullName>
        <ecNumber evidence="1">7.1.1.-</ecNumber>
    </recommendedName>
    <alternativeName>
        <fullName evidence="1">NAD(P)H dehydrogenase, subunit 2 B</fullName>
    </alternativeName>
    <alternativeName>
        <fullName evidence="1">NADH-plastoquinone oxidoreductase subunit 2 B</fullName>
    </alternativeName>
</protein>
<dbReference type="EC" id="7.1.1.-" evidence="1"/>
<dbReference type="EMBL" id="EU262887">
    <property type="protein sequence ID" value="ABW98763.1"/>
    <property type="molecule type" value="Genomic_DNA"/>
</dbReference>
<dbReference type="SMR" id="P0CD07"/>
<dbReference type="GO" id="GO:0009535">
    <property type="term" value="C:chloroplast thylakoid membrane"/>
    <property type="evidence" value="ECO:0007669"/>
    <property type="project" value="UniProtKB-SubCell"/>
</dbReference>
<dbReference type="GO" id="GO:0008137">
    <property type="term" value="F:NADH dehydrogenase (ubiquinone) activity"/>
    <property type="evidence" value="ECO:0007669"/>
    <property type="project" value="InterPro"/>
</dbReference>
<dbReference type="GO" id="GO:0048038">
    <property type="term" value="F:quinone binding"/>
    <property type="evidence" value="ECO:0007669"/>
    <property type="project" value="UniProtKB-KW"/>
</dbReference>
<dbReference type="GO" id="GO:0042773">
    <property type="term" value="P:ATP synthesis coupled electron transport"/>
    <property type="evidence" value="ECO:0007669"/>
    <property type="project" value="InterPro"/>
</dbReference>
<dbReference type="GO" id="GO:0019684">
    <property type="term" value="P:photosynthesis, light reaction"/>
    <property type="evidence" value="ECO:0007669"/>
    <property type="project" value="UniProtKB-UniRule"/>
</dbReference>
<dbReference type="HAMAP" id="MF_00445">
    <property type="entry name" value="NDH1_NuoN_1"/>
    <property type="match status" value="1"/>
</dbReference>
<dbReference type="InterPro" id="IPR010096">
    <property type="entry name" value="NADH-Q_OxRdtase_suN/2"/>
</dbReference>
<dbReference type="InterPro" id="IPR001750">
    <property type="entry name" value="ND/Mrp_TM"/>
</dbReference>
<dbReference type="InterPro" id="IPR045693">
    <property type="entry name" value="Ndh2_N"/>
</dbReference>
<dbReference type="NCBIfam" id="TIGR01770">
    <property type="entry name" value="NDH_I_N"/>
    <property type="match status" value="1"/>
</dbReference>
<dbReference type="NCBIfam" id="NF002701">
    <property type="entry name" value="PRK02504.1"/>
    <property type="match status" value="1"/>
</dbReference>
<dbReference type="PANTHER" id="PTHR22773">
    <property type="entry name" value="NADH DEHYDROGENASE"/>
    <property type="match status" value="1"/>
</dbReference>
<dbReference type="Pfam" id="PF19530">
    <property type="entry name" value="Ndh2_N"/>
    <property type="match status" value="1"/>
</dbReference>
<dbReference type="Pfam" id="PF00361">
    <property type="entry name" value="Proton_antipo_M"/>
    <property type="match status" value="1"/>
</dbReference>
<name>NU2C2_OENAR</name>